<geneLocation type="chloroplast"/>
<comment type="function">
    <text evidence="1">One of the components of the core complex of photosystem II (PSII), required for its stability and/or assembly. PSII is a light-driven water:plastoquinone oxidoreductase that uses light energy to abstract electrons from H(2)O, generating O(2) and a proton gradient subsequently used for ATP formation. It consists of a core antenna complex that captures photons, and an electron transfer chain that converts photonic excitation into a charge separation.</text>
</comment>
<comment type="subunit">
    <text evidence="1">PSII is composed of 1 copy each of membrane proteins PsbA, PsbB, PsbC, PsbD, PsbE, PsbF, PsbH, PsbI, PsbJ, PsbK, PsbL, PsbM, PsbT, PsbX, PsbY, PsbZ, Psb30/Ycf12, at least 3 peripheral proteins of the oxygen-evolving complex and a large number of cofactors. It forms dimeric complexes.</text>
</comment>
<comment type="subcellular location">
    <subcellularLocation>
        <location evidence="1">Plastid</location>
        <location evidence="1">Chloroplast thylakoid membrane</location>
        <topology evidence="1">Single-pass membrane protein</topology>
    </subcellularLocation>
</comment>
<comment type="similarity">
    <text evidence="1">Belongs to the PsbI family.</text>
</comment>
<gene>
    <name evidence="1" type="primary">psbI</name>
</gene>
<reference key="1">
    <citation type="journal article" date="2007" name="BMC Biol.">
        <title>A clade uniting the green algae Mesostigma viride and Chlorokybus atmophyticus represents the deepest branch of the Streptophyta in chloroplast genome-based phylogenies.</title>
        <authorList>
            <person name="Lemieux C."/>
            <person name="Otis C."/>
            <person name="Turmel M."/>
        </authorList>
    </citation>
    <scope>NUCLEOTIDE SEQUENCE [LARGE SCALE GENOMIC DNA]</scope>
    <source>
        <strain>SAG 48.80</strain>
    </source>
</reference>
<accession>Q19V93</accession>
<feature type="chain" id="PRO_0000298317" description="Photosystem II reaction center protein I">
    <location>
        <begin position="1"/>
        <end position="38"/>
    </location>
</feature>
<feature type="transmembrane region" description="Helical" evidence="1">
    <location>
        <begin position="4"/>
        <end position="24"/>
    </location>
</feature>
<proteinExistence type="inferred from homology"/>
<evidence type="ECO:0000255" key="1">
    <source>
        <dbReference type="HAMAP-Rule" id="MF_01316"/>
    </source>
</evidence>
<dbReference type="EMBL" id="DQ422812">
    <property type="protein sequence ID" value="ABD62218.2"/>
    <property type="molecule type" value="Genomic_DNA"/>
</dbReference>
<dbReference type="RefSeq" id="YP_001019109.1">
    <property type="nucleotide sequence ID" value="NC_008822.1"/>
</dbReference>
<dbReference type="SMR" id="Q19V93"/>
<dbReference type="GeneID" id="4783251"/>
<dbReference type="GO" id="GO:0009535">
    <property type="term" value="C:chloroplast thylakoid membrane"/>
    <property type="evidence" value="ECO:0007669"/>
    <property type="project" value="UniProtKB-SubCell"/>
</dbReference>
<dbReference type="GO" id="GO:0009539">
    <property type="term" value="C:photosystem II reaction center"/>
    <property type="evidence" value="ECO:0007669"/>
    <property type="project" value="InterPro"/>
</dbReference>
<dbReference type="GO" id="GO:0015979">
    <property type="term" value="P:photosynthesis"/>
    <property type="evidence" value="ECO:0007669"/>
    <property type="project" value="UniProtKB-UniRule"/>
</dbReference>
<dbReference type="HAMAP" id="MF_01316">
    <property type="entry name" value="PSII_PsbI"/>
    <property type="match status" value="1"/>
</dbReference>
<dbReference type="InterPro" id="IPR003686">
    <property type="entry name" value="PSII_PsbI"/>
</dbReference>
<dbReference type="InterPro" id="IPR037271">
    <property type="entry name" value="PSII_PsbI_sf"/>
</dbReference>
<dbReference type="NCBIfam" id="NF002735">
    <property type="entry name" value="PRK02655.1"/>
    <property type="match status" value="1"/>
</dbReference>
<dbReference type="PANTHER" id="PTHR35772">
    <property type="entry name" value="PHOTOSYSTEM II REACTION CENTER PROTEIN I"/>
    <property type="match status" value="1"/>
</dbReference>
<dbReference type="PANTHER" id="PTHR35772:SF1">
    <property type="entry name" value="PHOTOSYSTEM II REACTION CENTER PROTEIN I"/>
    <property type="match status" value="1"/>
</dbReference>
<dbReference type="Pfam" id="PF02532">
    <property type="entry name" value="PsbI"/>
    <property type="match status" value="1"/>
</dbReference>
<dbReference type="SUPFAM" id="SSF161041">
    <property type="entry name" value="Photosystem II reaction center protein I, PsbI"/>
    <property type="match status" value="1"/>
</dbReference>
<sequence>MLTLKIFVYTVVIFFVSLFIFGFLSNDPARNPKRKDID</sequence>
<organism>
    <name type="scientific">Chlorokybus atmophyticus</name>
    <name type="common">Soil alga</name>
    <dbReference type="NCBI Taxonomy" id="3144"/>
    <lineage>
        <taxon>Eukaryota</taxon>
        <taxon>Viridiplantae</taxon>
        <taxon>Streptophyta</taxon>
        <taxon>Chlorokybophyceae</taxon>
        <taxon>Chlorokybales</taxon>
        <taxon>Chlorokybaceae</taxon>
        <taxon>Chlorokybus</taxon>
    </lineage>
</organism>
<protein>
    <recommendedName>
        <fullName evidence="1">Photosystem II reaction center protein I</fullName>
        <shortName evidence="1">PSII-I</shortName>
    </recommendedName>
    <alternativeName>
        <fullName evidence="1">PSII 4.8 kDa protein</fullName>
    </alternativeName>
</protein>
<keyword id="KW-0150">Chloroplast</keyword>
<keyword id="KW-0472">Membrane</keyword>
<keyword id="KW-0602">Photosynthesis</keyword>
<keyword id="KW-0604">Photosystem II</keyword>
<keyword id="KW-0934">Plastid</keyword>
<keyword id="KW-0674">Reaction center</keyword>
<keyword id="KW-0793">Thylakoid</keyword>
<keyword id="KW-0812">Transmembrane</keyword>
<keyword id="KW-1133">Transmembrane helix</keyword>
<name>PSBI_CHLAT</name>